<reference key="1">
    <citation type="journal article" date="1993" name="Nucleic Acids Res.">
        <title>Molecular characterization of the Salmonella typhimurium parE gene.</title>
        <authorList>
            <person name="Springer A.L."/>
            <person name="Schmid M.B."/>
        </authorList>
    </citation>
    <scope>NUCLEOTIDE SEQUENCE [GENOMIC DNA]</scope>
    <scope>VARIANTS TEMPERATURE-SENSITIVE MET-67; SER-377 AND PRO-583</scope>
    <source>
        <strain>LT2</strain>
    </source>
</reference>
<reference key="2">
    <citation type="journal article" date="2001" name="Nature">
        <title>Complete genome sequence of Salmonella enterica serovar Typhimurium LT2.</title>
        <authorList>
            <person name="McClelland M."/>
            <person name="Sanderson K.E."/>
            <person name="Spieth J."/>
            <person name="Clifton S.W."/>
            <person name="Latreille P."/>
            <person name="Courtney L."/>
            <person name="Porwollik S."/>
            <person name="Ali J."/>
            <person name="Dante M."/>
            <person name="Du F."/>
            <person name="Hou S."/>
            <person name="Layman D."/>
            <person name="Leonard S."/>
            <person name="Nguyen C."/>
            <person name="Scott K."/>
            <person name="Holmes A."/>
            <person name="Grewal N."/>
            <person name="Mulvaney E."/>
            <person name="Ryan E."/>
            <person name="Sun H."/>
            <person name="Florea L."/>
            <person name="Miller W."/>
            <person name="Stoneking T."/>
            <person name="Nhan M."/>
            <person name="Waterston R."/>
            <person name="Wilson R.K."/>
        </authorList>
    </citation>
    <scope>NUCLEOTIDE SEQUENCE [LARGE SCALE GENOMIC DNA]</scope>
    <source>
        <strain>LT2 / SGSC1412 / ATCC 700720</strain>
    </source>
</reference>
<reference key="3">
    <citation type="journal article" date="2012" name="PLoS Genet.">
        <title>Rates of gyrase supercoiling and transcription elongation control supercoil density in a bacterial chromosome.</title>
        <authorList>
            <person name="Rovinskiy N."/>
            <person name="Agbleke A.A."/>
            <person name="Chesnokova O."/>
            <person name="Pang Z."/>
            <person name="Higgins N.P."/>
        </authorList>
    </citation>
    <scope>FUNCTION</scope>
    <scope>MUTAGENESIS OF VAL-67</scope>
    <source>
        <strain>LT2 / SGSC1412 / ATCC 700720</strain>
    </source>
</reference>
<comment type="function">
    <text evidence="2">Topoisomerase IV is essential for chromosome segregation. It relaxes supercoiled DNA (PubMed:22916023). Performs the decatenation events required during the replication of a circular DNA molecule.</text>
</comment>
<comment type="catalytic activity">
    <reaction evidence="1">
        <text>ATP-dependent breakage, passage and rejoining of double-stranded DNA.</text>
        <dbReference type="EC" id="5.6.2.2"/>
    </reaction>
</comment>
<comment type="cofactor">
    <cofactor evidence="1">
        <name>Mg(2+)</name>
        <dbReference type="ChEBI" id="CHEBI:18420"/>
    </cofactor>
    <cofactor evidence="1">
        <name>Mn(2+)</name>
        <dbReference type="ChEBI" id="CHEBI:29035"/>
    </cofactor>
    <cofactor evidence="1">
        <name>Ca(2+)</name>
        <dbReference type="ChEBI" id="CHEBI:29108"/>
    </cofactor>
    <text evidence="1">Binds two Mg(2+) per subunit. The magnesium ions form salt bridges with both the protein and the DNA. Can also accept other divalent metal cations, such as Mn(2+) or Ca(2+).</text>
</comment>
<comment type="subunit">
    <text evidence="1">Heterotetramer composed of ParC and ParE.</text>
</comment>
<comment type="similarity">
    <text evidence="1">Belongs to the type II topoisomerase family. ParE type 1 subfamily.</text>
</comment>
<name>PARE_SALTY</name>
<organism>
    <name type="scientific">Salmonella typhimurium (strain LT2 / SGSC1412 / ATCC 700720)</name>
    <dbReference type="NCBI Taxonomy" id="99287"/>
    <lineage>
        <taxon>Bacteria</taxon>
        <taxon>Pseudomonadati</taxon>
        <taxon>Pseudomonadota</taxon>
        <taxon>Gammaproteobacteria</taxon>
        <taxon>Enterobacterales</taxon>
        <taxon>Enterobacteriaceae</taxon>
        <taxon>Salmonella</taxon>
    </lineage>
</organism>
<evidence type="ECO:0000255" key="1">
    <source>
        <dbReference type="HAMAP-Rule" id="MF_00938"/>
    </source>
</evidence>
<evidence type="ECO:0000269" key="2">
    <source>
    </source>
</evidence>
<evidence type="ECO:0000269" key="3">
    <source>
    </source>
</evidence>
<evidence type="ECO:0000305" key="4"/>
<feature type="chain" id="PRO_0000145429" description="DNA topoisomerase 4 subunit B">
    <location>
        <begin position="1"/>
        <end position="630"/>
    </location>
</feature>
<feature type="domain" description="Toprim" evidence="1">
    <location>
        <begin position="412"/>
        <end position="525"/>
    </location>
</feature>
<feature type="binding site" evidence="1">
    <location>
        <position position="5"/>
    </location>
    <ligand>
        <name>ATP</name>
        <dbReference type="ChEBI" id="CHEBI:30616"/>
    </ligand>
</feature>
<feature type="binding site" evidence="1">
    <location>
        <position position="42"/>
    </location>
    <ligand>
        <name>ATP</name>
        <dbReference type="ChEBI" id="CHEBI:30616"/>
    </ligand>
</feature>
<feature type="binding site" evidence="1">
    <location>
        <position position="69"/>
    </location>
    <ligand>
        <name>ATP</name>
        <dbReference type="ChEBI" id="CHEBI:30616"/>
    </ligand>
</feature>
<feature type="binding site" evidence="1">
    <location>
        <begin position="110"/>
        <end position="116"/>
    </location>
    <ligand>
        <name>ATP</name>
        <dbReference type="ChEBI" id="CHEBI:30616"/>
    </ligand>
</feature>
<feature type="binding site" evidence="1">
    <location>
        <position position="334"/>
    </location>
    <ligand>
        <name>ATP</name>
        <dbReference type="ChEBI" id="CHEBI:30616"/>
    </ligand>
</feature>
<feature type="binding site" evidence="1">
    <location>
        <position position="418"/>
    </location>
    <ligand>
        <name>Mg(2+)</name>
        <dbReference type="ChEBI" id="CHEBI:18420"/>
        <label>1</label>
        <note>catalytic</note>
    </ligand>
</feature>
<feature type="binding site" evidence="1">
    <location>
        <position position="490"/>
    </location>
    <ligand>
        <name>Mg(2+)</name>
        <dbReference type="ChEBI" id="CHEBI:18420"/>
        <label>1</label>
        <note>catalytic</note>
    </ligand>
</feature>
<feature type="binding site" evidence="1">
    <location>
        <position position="490"/>
    </location>
    <ligand>
        <name>Mg(2+)</name>
        <dbReference type="ChEBI" id="CHEBI:18420"/>
        <label>2</label>
    </ligand>
</feature>
<feature type="binding site" evidence="1">
    <location>
        <position position="492"/>
    </location>
    <ligand>
        <name>Mg(2+)</name>
        <dbReference type="ChEBI" id="CHEBI:18420"/>
        <label>2</label>
    </ligand>
</feature>
<feature type="site" description="Interaction with DNA" evidence="1">
    <location>
        <position position="443"/>
    </location>
</feature>
<feature type="site" description="Interaction with DNA" evidence="1">
    <location>
        <position position="446"/>
    </location>
</feature>
<feature type="site" description="Interaction with DNA" evidence="1">
    <location>
        <position position="497"/>
    </location>
</feature>
<feature type="site" description="Interaction with DNA" evidence="1">
    <location>
        <position position="615"/>
    </location>
</feature>
<feature type="sequence variant" description="In temperature-sensitive mutants parE206 and parE374." evidence="3">
    <original>V</original>
    <variation>M</variation>
    <location>
        <position position="67"/>
    </location>
</feature>
<feature type="sequence variant" description="In temperature-sensitive mutant parE377." evidence="3">
    <original>G</original>
    <variation>S</variation>
    <location>
        <position position="399"/>
    </location>
</feature>
<feature type="sequence variant" description="In temperature-sensitive mutant parE493." evidence="3">
    <original>T</original>
    <variation>P</variation>
    <location>
        <position position="583"/>
    </location>
</feature>
<feature type="mutagenesis site" description="In parE206TS; a temperature-sensitive mutant, 33% decreased growth rate, slightly decreased negative supercoiling at permissive temperature." evidence="2">
    <original>V</original>
    <variation>M</variation>
    <location>
        <position position="67"/>
    </location>
</feature>
<feature type="sequence conflict" description="In Ref. 1; AAA27182." evidence="4" ref="1">
    <original>V</original>
    <variation>Q</variation>
    <location>
        <position position="305"/>
    </location>
</feature>
<feature type="sequence conflict" description="In Ref. 1; AAA27182." evidence="4" ref="1">
    <original>T</original>
    <variation>P</variation>
    <location>
        <position position="333"/>
    </location>
</feature>
<feature type="sequence conflict" description="In Ref. 1; AAA27182." evidence="4" ref="1">
    <original>A</original>
    <variation>R</variation>
    <location>
        <position position="383"/>
    </location>
</feature>
<accession>P0A2I5</accession>
<accession>P31598</accession>
<sequence>MTQTYNADAIEVLTGLEPVRRRPGMYTDTTRPNHLGQEVIDNSVDEALAGHAKRVDVILHADQSLEVIDDGRGMPVDIHPEEGVPAVELILCRLHAGGKFSNKNYQFSGGLHGVGISVVNALSKRVEVTVRRDGQVYNIAFENGEKVQDLQVVGTCGKRNTGTSVHFWPDESFFDSPRFSVSRLMHVLKAKAVLCPGVEITFKDEVNNSEQRWCYQDGLNDYLGEAVNGLPTLPEKPFIGNFNGETEAVDWALLWLPEGGELLTESYVNLIPTMQGGTHVNGLRQGLLDAMREFCEYRNILPRGVKLSAEDIWDRCAYVLSVKMQDPQFAGQTKERLSSRQCAAFVSGVVKDAFSLWLNQNVQAAEQLAEMAIASAQRRLRAAKKVVRKKLTSGPALPGKLADCTAQDLNRTELFLVEGDSAGGSAKQARDREYQAIMPLKGKILNTWEVSSDEVLASQEVHDISVAIGIDPDSDDLSQLRYGKICILADADSDGLHIATLLCALFVRHFRALVKNGHVYVALPPLYRIDLGKEVYYALTEEEKAGVLEQLKRKKGKPNVQRFKGLGEMNPMQLRETTLDPNTRRLVQLTISDEDDQRTNAMMDMLLAKKRSEDRRNWLQEKGDLADLDV</sequence>
<proteinExistence type="evidence at protein level"/>
<gene>
    <name evidence="1" type="primary">parE</name>
    <name type="ordered locus">STM3181</name>
</gene>
<protein>
    <recommendedName>
        <fullName evidence="1">DNA topoisomerase 4 subunit B</fullName>
        <ecNumber evidence="1">5.6.2.2</ecNumber>
    </recommendedName>
    <alternativeName>
        <fullName evidence="1">Topoisomerase IV subunit B</fullName>
    </alternativeName>
</protein>
<keyword id="KW-0067">ATP-binding</keyword>
<keyword id="KW-0238">DNA-binding</keyword>
<keyword id="KW-0413">Isomerase</keyword>
<keyword id="KW-0460">Magnesium</keyword>
<keyword id="KW-0479">Metal-binding</keyword>
<keyword id="KW-0547">Nucleotide-binding</keyword>
<keyword id="KW-1185">Reference proteome</keyword>
<keyword id="KW-0799">Topoisomerase</keyword>
<dbReference type="EC" id="5.6.2.2" evidence="1"/>
<dbReference type="EMBL" id="L05544">
    <property type="protein sequence ID" value="AAA27182.1"/>
    <property type="molecule type" value="Genomic_DNA"/>
</dbReference>
<dbReference type="EMBL" id="AE006468">
    <property type="protein sequence ID" value="AAL22055.1"/>
    <property type="molecule type" value="Genomic_DNA"/>
</dbReference>
<dbReference type="PIR" id="S33711">
    <property type="entry name" value="S33711"/>
</dbReference>
<dbReference type="RefSeq" id="NP_462096.1">
    <property type="nucleotide sequence ID" value="NC_003197.2"/>
</dbReference>
<dbReference type="RefSeq" id="WP_000195318.1">
    <property type="nucleotide sequence ID" value="NC_003197.2"/>
</dbReference>
<dbReference type="SMR" id="P0A2I5"/>
<dbReference type="STRING" id="99287.STM3181"/>
<dbReference type="PaxDb" id="99287-STM3181"/>
<dbReference type="GeneID" id="1254704"/>
<dbReference type="KEGG" id="stm:STM3181"/>
<dbReference type="PATRIC" id="fig|99287.12.peg.3374"/>
<dbReference type="HOGENOM" id="CLU_006146_1_0_6"/>
<dbReference type="OMA" id="FRFIMER"/>
<dbReference type="PhylomeDB" id="P0A2I5"/>
<dbReference type="BioCyc" id="SENT99287:STM3181-MONOMER"/>
<dbReference type="Proteomes" id="UP000001014">
    <property type="component" value="Chromosome"/>
</dbReference>
<dbReference type="GO" id="GO:0005694">
    <property type="term" value="C:chromosome"/>
    <property type="evidence" value="ECO:0007669"/>
    <property type="project" value="InterPro"/>
</dbReference>
<dbReference type="GO" id="GO:0005524">
    <property type="term" value="F:ATP binding"/>
    <property type="evidence" value="ECO:0007669"/>
    <property type="project" value="UniProtKB-UniRule"/>
</dbReference>
<dbReference type="GO" id="GO:0003677">
    <property type="term" value="F:DNA binding"/>
    <property type="evidence" value="ECO:0007669"/>
    <property type="project" value="UniProtKB-UniRule"/>
</dbReference>
<dbReference type="GO" id="GO:0003918">
    <property type="term" value="F:DNA topoisomerase type II (double strand cut, ATP-hydrolyzing) activity"/>
    <property type="evidence" value="ECO:0000318"/>
    <property type="project" value="GO_Central"/>
</dbReference>
<dbReference type="GO" id="GO:0046872">
    <property type="term" value="F:metal ion binding"/>
    <property type="evidence" value="ECO:0007669"/>
    <property type="project" value="UniProtKB-KW"/>
</dbReference>
<dbReference type="GO" id="GO:0007059">
    <property type="term" value="P:chromosome segregation"/>
    <property type="evidence" value="ECO:0007669"/>
    <property type="project" value="UniProtKB-UniRule"/>
</dbReference>
<dbReference type="GO" id="GO:0006265">
    <property type="term" value="P:DNA topological change"/>
    <property type="evidence" value="ECO:0000318"/>
    <property type="project" value="GO_Central"/>
</dbReference>
<dbReference type="CDD" id="cd16928">
    <property type="entry name" value="HATPase_GyrB-like"/>
    <property type="match status" value="1"/>
</dbReference>
<dbReference type="CDD" id="cd00822">
    <property type="entry name" value="TopoII_Trans_DNA_gyrase"/>
    <property type="match status" value="1"/>
</dbReference>
<dbReference type="FunFam" id="3.30.565.10:FF:000002">
    <property type="entry name" value="DNA gyrase subunit B"/>
    <property type="match status" value="1"/>
</dbReference>
<dbReference type="FunFam" id="3.30.230.10:FF:000012">
    <property type="entry name" value="DNA topoisomerase 4 subunit B"/>
    <property type="match status" value="1"/>
</dbReference>
<dbReference type="FunFam" id="3.40.50.670:FF:000003">
    <property type="entry name" value="DNA topoisomerase 4 subunit B"/>
    <property type="match status" value="1"/>
</dbReference>
<dbReference type="Gene3D" id="3.30.230.10">
    <property type="match status" value="1"/>
</dbReference>
<dbReference type="Gene3D" id="3.40.50.670">
    <property type="match status" value="1"/>
</dbReference>
<dbReference type="Gene3D" id="3.30.565.10">
    <property type="entry name" value="Histidine kinase-like ATPase, C-terminal domain"/>
    <property type="match status" value="1"/>
</dbReference>
<dbReference type="HAMAP" id="MF_00938">
    <property type="entry name" value="ParE_type1"/>
    <property type="match status" value="1"/>
</dbReference>
<dbReference type="InterPro" id="IPR002288">
    <property type="entry name" value="DNA_gyrase_B_C"/>
</dbReference>
<dbReference type="InterPro" id="IPR036890">
    <property type="entry name" value="HATPase_C_sf"/>
</dbReference>
<dbReference type="InterPro" id="IPR020568">
    <property type="entry name" value="Ribosomal_Su5_D2-typ_SF"/>
</dbReference>
<dbReference type="InterPro" id="IPR014721">
    <property type="entry name" value="Ribsml_uS5_D2-typ_fold_subgr"/>
</dbReference>
<dbReference type="InterPro" id="IPR001241">
    <property type="entry name" value="Topo_IIA"/>
</dbReference>
<dbReference type="InterPro" id="IPR013760">
    <property type="entry name" value="Topo_IIA-like_dom_sf"/>
</dbReference>
<dbReference type="InterPro" id="IPR013759">
    <property type="entry name" value="Topo_IIA_B_C"/>
</dbReference>
<dbReference type="InterPro" id="IPR013506">
    <property type="entry name" value="Topo_IIA_bsu_dom2"/>
</dbReference>
<dbReference type="InterPro" id="IPR018522">
    <property type="entry name" value="TopoIIA_CS"/>
</dbReference>
<dbReference type="InterPro" id="IPR005737">
    <property type="entry name" value="TopoIV_B_Gneg"/>
</dbReference>
<dbReference type="InterPro" id="IPR006171">
    <property type="entry name" value="TOPRIM_dom"/>
</dbReference>
<dbReference type="NCBIfam" id="TIGR01055">
    <property type="entry name" value="parE_Gneg"/>
    <property type="match status" value="1"/>
</dbReference>
<dbReference type="PANTHER" id="PTHR45866">
    <property type="entry name" value="DNA GYRASE/TOPOISOMERASE SUBUNIT B"/>
    <property type="match status" value="1"/>
</dbReference>
<dbReference type="PANTHER" id="PTHR45866:SF4">
    <property type="entry name" value="DNA TOPOISOMERASE 4 SUBUNIT B"/>
    <property type="match status" value="1"/>
</dbReference>
<dbReference type="Pfam" id="PF00204">
    <property type="entry name" value="DNA_gyraseB"/>
    <property type="match status" value="1"/>
</dbReference>
<dbReference type="Pfam" id="PF00986">
    <property type="entry name" value="DNA_gyraseB_C"/>
    <property type="match status" value="1"/>
</dbReference>
<dbReference type="Pfam" id="PF02518">
    <property type="entry name" value="HATPase_c"/>
    <property type="match status" value="1"/>
</dbReference>
<dbReference type="Pfam" id="PF01751">
    <property type="entry name" value="Toprim"/>
    <property type="match status" value="1"/>
</dbReference>
<dbReference type="PRINTS" id="PR01098">
    <property type="entry name" value="TOPISMRASE4B"/>
</dbReference>
<dbReference type="PRINTS" id="PR00418">
    <property type="entry name" value="TPI2FAMILY"/>
</dbReference>
<dbReference type="SMART" id="SM00387">
    <property type="entry name" value="HATPase_c"/>
    <property type="match status" value="1"/>
</dbReference>
<dbReference type="SMART" id="SM00433">
    <property type="entry name" value="TOP2c"/>
    <property type="match status" value="1"/>
</dbReference>
<dbReference type="SUPFAM" id="SSF55874">
    <property type="entry name" value="ATPase domain of HSP90 chaperone/DNA topoisomerase II/histidine kinase"/>
    <property type="match status" value="1"/>
</dbReference>
<dbReference type="SUPFAM" id="SSF54211">
    <property type="entry name" value="Ribosomal protein S5 domain 2-like"/>
    <property type="match status" value="1"/>
</dbReference>
<dbReference type="SUPFAM" id="SSF56719">
    <property type="entry name" value="Type II DNA topoisomerase"/>
    <property type="match status" value="1"/>
</dbReference>
<dbReference type="PROSITE" id="PS00177">
    <property type="entry name" value="TOPOISOMERASE_II"/>
    <property type="match status" value="1"/>
</dbReference>
<dbReference type="PROSITE" id="PS50880">
    <property type="entry name" value="TOPRIM"/>
    <property type="match status" value="1"/>
</dbReference>